<name>CTK1_YEAST</name>
<feature type="chain" id="PRO_0000085906" description="CTD kinase subunit alpha">
    <location>
        <begin position="1"/>
        <end position="528"/>
    </location>
</feature>
<feature type="domain" description="Protein kinase" evidence="3">
    <location>
        <begin position="183"/>
        <end position="469"/>
    </location>
</feature>
<feature type="region of interest" description="Disordered" evidence="5">
    <location>
        <begin position="1"/>
        <end position="148"/>
    </location>
</feature>
<feature type="region of interest" description="Disordered" evidence="5">
    <location>
        <begin position="497"/>
        <end position="528"/>
    </location>
</feature>
<feature type="short sequence motif" description="Nuclear localization signal" evidence="2">
    <location>
        <begin position="37"/>
        <end position="44"/>
    </location>
</feature>
<feature type="compositionally biased region" description="Polar residues" evidence="5">
    <location>
        <begin position="1"/>
        <end position="15"/>
    </location>
</feature>
<feature type="compositionally biased region" description="Polar residues" evidence="5">
    <location>
        <begin position="45"/>
        <end position="103"/>
    </location>
</feature>
<feature type="compositionally biased region" description="Basic and acidic residues" evidence="5">
    <location>
        <begin position="104"/>
        <end position="118"/>
    </location>
</feature>
<feature type="compositionally biased region" description="Polar residues" evidence="5">
    <location>
        <begin position="134"/>
        <end position="144"/>
    </location>
</feature>
<feature type="compositionally biased region" description="Low complexity" evidence="5">
    <location>
        <begin position="504"/>
        <end position="522"/>
    </location>
</feature>
<feature type="active site" description="Proton acceptor" evidence="3 4">
    <location>
        <position position="306"/>
    </location>
</feature>
<feature type="binding site" evidence="3">
    <location>
        <begin position="189"/>
        <end position="197"/>
    </location>
    <ligand>
        <name>ATP</name>
        <dbReference type="ChEBI" id="CHEBI:30616"/>
    </ligand>
</feature>
<feature type="binding site" evidence="3">
    <location>
        <position position="212"/>
    </location>
    <ligand>
        <name>ATP</name>
        <dbReference type="ChEBI" id="CHEBI:30616"/>
    </ligand>
</feature>
<feature type="modified residue" description="Phosphoserine; by autocatalysis" evidence="1">
    <location>
        <position position="14"/>
    </location>
</feature>
<feature type="modified residue" description="Phosphothreonine" evidence="16">
    <location>
        <position position="338"/>
    </location>
</feature>
<feature type="mutagenesis site" description="Cold-sensitive. Sensitive to hydroxyurea and UV irradiation. Interferes with ATP-binding." evidence="11 16">
    <original>D</original>
    <variation>N</variation>
    <location>
        <position position="324"/>
    </location>
</feature>
<feature type="mutagenesis site" description="Cold-sensitive. Abolishes kinase activity. Delayed growth at early stationary phase. Shows no increase in CTD Ser-2 phosphorylation in the transition from rapid growth to stationary phase. Has compromised transcriptional activation of two stationary-phase genes CTT1 and SPI1." evidence="16">
    <original>T</original>
    <variation>A</variation>
    <location>
        <position position="338"/>
    </location>
</feature>
<feature type="strand" evidence="24">
    <location>
        <begin position="173"/>
        <end position="177"/>
    </location>
</feature>
<feature type="strand" evidence="24">
    <location>
        <begin position="182"/>
        <end position="190"/>
    </location>
</feature>
<feature type="strand" evidence="24">
    <location>
        <begin position="197"/>
        <end position="202"/>
    </location>
</feature>
<feature type="turn" evidence="24">
    <location>
        <begin position="203"/>
        <end position="205"/>
    </location>
</feature>
<feature type="strand" evidence="24">
    <location>
        <begin position="208"/>
        <end position="214"/>
    </location>
</feature>
<feature type="strand" evidence="24">
    <location>
        <begin position="220"/>
        <end position="223"/>
    </location>
</feature>
<feature type="helix" evidence="24">
    <location>
        <begin position="225"/>
        <end position="234"/>
    </location>
</feature>
<feature type="strand" evidence="24">
    <location>
        <begin position="247"/>
        <end position="251"/>
    </location>
</feature>
<feature type="turn" evidence="24">
    <location>
        <begin position="252"/>
        <end position="254"/>
    </location>
</feature>
<feature type="strand" evidence="24">
    <location>
        <begin position="255"/>
        <end position="261"/>
    </location>
</feature>
<feature type="strand" evidence="24">
    <location>
        <begin position="264"/>
        <end position="266"/>
    </location>
</feature>
<feature type="helix" evidence="24">
    <location>
        <begin position="267"/>
        <end position="271"/>
    </location>
</feature>
<feature type="strand" evidence="24">
    <location>
        <begin position="274"/>
        <end position="276"/>
    </location>
</feature>
<feature type="helix" evidence="24">
    <location>
        <begin position="280"/>
        <end position="299"/>
    </location>
</feature>
<feature type="helix" evidence="24">
    <location>
        <begin position="309"/>
        <end position="311"/>
    </location>
</feature>
<feature type="strand" evidence="24">
    <location>
        <begin position="312"/>
        <end position="314"/>
    </location>
</feature>
<feature type="strand" evidence="24">
    <location>
        <begin position="320"/>
        <end position="322"/>
    </location>
</feature>
<feature type="helix" evidence="24">
    <location>
        <begin position="344"/>
        <end position="346"/>
    </location>
</feature>
<feature type="helix" evidence="24">
    <location>
        <begin position="349"/>
        <end position="352"/>
    </location>
</feature>
<feature type="helix" evidence="24">
    <location>
        <begin position="361"/>
        <end position="376"/>
    </location>
</feature>
<feature type="helix" evidence="24">
    <location>
        <begin position="386"/>
        <end position="397"/>
    </location>
</feature>
<feature type="turn" evidence="24">
    <location>
        <begin position="402"/>
        <end position="404"/>
    </location>
</feature>
<feature type="helix" evidence="24">
    <location>
        <begin position="408"/>
        <end position="410"/>
    </location>
</feature>
<feature type="helix" evidence="24">
    <location>
        <begin position="414"/>
        <end position="417"/>
    </location>
</feature>
<feature type="helix" evidence="24">
    <location>
        <begin position="429"/>
        <end position="432"/>
    </location>
</feature>
<feature type="turn" evidence="24">
    <location>
        <begin position="434"/>
        <end position="436"/>
    </location>
</feature>
<feature type="strand" evidence="24">
    <location>
        <begin position="437"/>
        <end position="439"/>
    </location>
</feature>
<feature type="helix" evidence="24">
    <location>
        <begin position="440"/>
        <end position="449"/>
    </location>
</feature>
<feature type="turn" evidence="24">
    <location>
        <begin position="454"/>
        <end position="456"/>
    </location>
</feature>
<feature type="helix" evidence="24">
    <location>
        <begin position="460"/>
        <end position="464"/>
    </location>
</feature>
<feature type="helix" evidence="24">
    <location>
        <begin position="467"/>
        <end position="470"/>
    </location>
</feature>
<feature type="strand" evidence="24">
    <location>
        <begin position="471"/>
        <end position="473"/>
    </location>
</feature>
<comment type="function">
    <text evidence="6 9 10 11 13 14 15 17 18 19 20 22">Catalytic subunit of the CTDK-I complex, which hyperphosphorylates the C-terminal heptapeptide repeat domain (CTD) of the largest RNA polymerase II subunit. CTDK-I phosphorylates 'Ser-5' if the CTD substrate is not phosphorylated at 'Ser-5', but will phosphorylate 'Ser-2' of a CTD substrate if 'Ser-5' is already phosphorylated. CTDK-I is also more reactive toward substrates that are prephosphorylated at 'Ser-2' or 'Ser-5' compared with an unphosphorylated CTD substrate, therefore efficiently creating doubly phosphorylated CTD repeats. Involved in RNA polymerase II transcriptional elongation, and through PTI1, pre-mRNA 3'-end processing. Participates in both positive and negative regulation of CTD phosphorylation. Required for DNA damage induced transcription, including the expression of the RNR genes, and reprogramming of gene expression upon amino acid starvation. Required for SET2 mediated H3K36 methylation. Also regulates H3K4 methylation. Controls the maintenance of suppressive chromatin in the coding regions of genes by both promoting H3K36 methylation, which leads to histone deacetylation, and catalyzing phosphorylation of the CTD required to localize H3K4 chromatin modification specifically to the 5' ends of genes, thereby creating a boundary for H3K4 methylation that prevents a mark associated with transcriptional initiation from spreading into the bodies of genes. Involved in RNA polymerase I transcription. Involved in telomere maintenance. Acts together with SNF1 to induce GSY2 transcription in response to glucose limitation. Involved in the adaptation to alternative carbon sources, including galactose, glycerol and ethanol, but not raffinose. Required for the integrity of the rDNA locus. Functions in translation elongation by enhancing decoding fidelity. Needed for translational accuracy by phosphorylating RPS2.</text>
</comment>
<comment type="catalytic activity">
    <reaction>
        <text>[DNA-directed RNA polymerase] + ATP = phospho-[DNA-directed RNA polymerase] + ADP + H(+)</text>
        <dbReference type="Rhea" id="RHEA:10216"/>
        <dbReference type="Rhea" id="RHEA-COMP:11321"/>
        <dbReference type="Rhea" id="RHEA-COMP:11322"/>
        <dbReference type="ChEBI" id="CHEBI:15378"/>
        <dbReference type="ChEBI" id="CHEBI:30616"/>
        <dbReference type="ChEBI" id="CHEBI:43176"/>
        <dbReference type="ChEBI" id="CHEBI:68546"/>
        <dbReference type="ChEBI" id="CHEBI:456216"/>
        <dbReference type="EC" id="2.7.11.23"/>
    </reaction>
</comment>
<comment type="subunit">
    <text evidence="7 15 17 20 21">CTDK-I consists of three subunits, CTK1, CTK2 and CTK3 (also called alpha, beta and gamma). Interacts directly with the CTK2 and CTK3 subunits, this interaction is required for kinase activity. Interacts with RNA polymerase I. Interacts with SNF1, but only at low glucose concentrations. Interacts with translating ribosomes.</text>
</comment>
<comment type="interaction">
    <interactant intactId="EBI-5230">
        <id>Q03957</id>
    </interactant>
    <interactant intactId="EBI-5236">
        <id>P46962</id>
        <label>CTK2</label>
    </interactant>
    <organismsDiffer>false</organismsDiffer>
    <experiments>10</experiments>
</comment>
<comment type="interaction">
    <interactant intactId="EBI-5230">
        <id>Q03957</id>
    </interactant>
    <interactant intactId="EBI-5241">
        <id>P46963</id>
        <label>CTK3</label>
    </interactant>
    <organismsDiffer>false</organismsDiffer>
    <experiments>8</experiments>
</comment>
<comment type="subcellular location">
    <subcellularLocation>
        <location>Nucleus</location>
        <location>Nucleolus</location>
    </subcellularLocation>
    <subcellularLocation>
        <location>Cytoplasm</location>
    </subcellularLocation>
</comment>
<comment type="PTM">
    <text evidence="16">Phosphorylated on Thr-338 by CAK1. Phosphorylation is essential for the elevated CTD Ser-2 phosphorylation and required to activate transcription of stationary-phase genes during the diauxic shift.</text>
</comment>
<comment type="disruption phenotype">
    <text evidence="6 8 11 21">Null mutants are viable, but grow more slowly than wild-type cells at 30 degrees Celsius. They are cold-sensitive, failing to grow at 12 degrees Celsius. They display flocculent growth in liquid media and they show abnormal cell morphologies, for example, a significant fraction of the cells are greatly enlarged. Deletion mutant has increased phosphorylation of 'Ser-5' of the CTD repeat during logarithmic growth. Deletion eliminates transient increase in CTD 'Ser-2' phosphorylation observed during diauxic shift. Deletion mutant is synthetically lethal when combined with deletion of DST1 or ELP genes. Deletion mutants are modestly sensitive to the uracil analog 6-azauracil (6AU), which inhibits elongation by depleting nucleotide pools. Deletion mutant is sensitive to the DNA synthesis inhibitor hydroxyurea (HU) and UV irradiation. 'Ser-2' phosphorylation within the CTD repeats is not increased in deletion mutants upon treatment with DNA-damaging agents.</text>
</comment>
<comment type="miscellaneous">
    <text evidence="12">Present with 125 molecules/cell in log phase SD medium.</text>
</comment>
<comment type="similarity">
    <text evidence="23">Belongs to the protein kinase superfamily. CMGC Ser/Thr protein kinase family. CDC2/CDKX subfamily.</text>
</comment>
<accession>Q03957</accession>
<accession>D6VX57</accession>
<gene>
    <name type="primary">CTK1</name>
    <name type="ordered locus">YKL139W</name>
</gene>
<evidence type="ECO:0000250" key="1"/>
<evidence type="ECO:0000255" key="2"/>
<evidence type="ECO:0000255" key="3">
    <source>
        <dbReference type="PROSITE-ProRule" id="PRU00159"/>
    </source>
</evidence>
<evidence type="ECO:0000255" key="4">
    <source>
        <dbReference type="PROSITE-ProRule" id="PRU10027"/>
    </source>
</evidence>
<evidence type="ECO:0000256" key="5">
    <source>
        <dbReference type="SAM" id="MobiDB-lite"/>
    </source>
</evidence>
<evidence type="ECO:0000269" key="6">
    <source>
    </source>
</evidence>
<evidence type="ECO:0000269" key="7">
    <source>
    </source>
</evidence>
<evidence type="ECO:0000269" key="8">
    <source>
    </source>
</evidence>
<evidence type="ECO:0000269" key="9">
    <source>
    </source>
</evidence>
<evidence type="ECO:0000269" key="10">
    <source>
    </source>
</evidence>
<evidence type="ECO:0000269" key="11">
    <source>
    </source>
</evidence>
<evidence type="ECO:0000269" key="12">
    <source>
    </source>
</evidence>
<evidence type="ECO:0000269" key="13">
    <source>
    </source>
</evidence>
<evidence type="ECO:0000269" key="14">
    <source>
    </source>
</evidence>
<evidence type="ECO:0000269" key="15">
    <source>
    </source>
</evidence>
<evidence type="ECO:0000269" key="16">
    <source>
    </source>
</evidence>
<evidence type="ECO:0000269" key="17">
    <source>
    </source>
</evidence>
<evidence type="ECO:0000269" key="18">
    <source>
    </source>
</evidence>
<evidence type="ECO:0000269" key="19">
    <source>
    </source>
</evidence>
<evidence type="ECO:0000269" key="20">
    <source>
    </source>
</evidence>
<evidence type="ECO:0000269" key="21">
    <source>
    </source>
</evidence>
<evidence type="ECO:0000269" key="22">
    <source>
    </source>
</evidence>
<evidence type="ECO:0000305" key="23"/>
<evidence type="ECO:0007829" key="24">
    <source>
        <dbReference type="PDB" id="7JV7"/>
    </source>
</evidence>
<organism>
    <name type="scientific">Saccharomyces cerevisiae (strain ATCC 204508 / S288c)</name>
    <name type="common">Baker's yeast</name>
    <dbReference type="NCBI Taxonomy" id="559292"/>
    <lineage>
        <taxon>Eukaryota</taxon>
        <taxon>Fungi</taxon>
        <taxon>Dikarya</taxon>
        <taxon>Ascomycota</taxon>
        <taxon>Saccharomycotina</taxon>
        <taxon>Saccharomycetes</taxon>
        <taxon>Saccharomycetales</taxon>
        <taxon>Saccharomycetaceae</taxon>
        <taxon>Saccharomyces</taxon>
    </lineage>
</organism>
<protein>
    <recommendedName>
        <fullName>CTD kinase subunit alpha</fullName>
        <shortName>CTDK-I subunit alpha</shortName>
        <ecNumber>2.7.11.23</ecNumber>
    </recommendedName>
    <alternativeName>
        <fullName>CTD kinase 58 kDa subunit</fullName>
    </alternativeName>
    <alternativeName>
        <fullName>CTD kinase subunit 1</fullName>
    </alternativeName>
</protein>
<dbReference type="EC" id="2.7.11.23"/>
<dbReference type="EMBL" id="M69024">
    <property type="protein sequence ID" value="AAC41642.1"/>
    <property type="molecule type" value="Genomic_DNA"/>
</dbReference>
<dbReference type="EMBL" id="Z28139">
    <property type="protein sequence ID" value="CAA81980.1"/>
    <property type="molecule type" value="Genomic_DNA"/>
</dbReference>
<dbReference type="EMBL" id="BK006944">
    <property type="protein sequence ID" value="DAA09023.1"/>
    <property type="molecule type" value="Genomic_DNA"/>
</dbReference>
<dbReference type="PIR" id="S32593">
    <property type="entry name" value="S32593"/>
</dbReference>
<dbReference type="RefSeq" id="NP_012783.1">
    <property type="nucleotide sequence ID" value="NM_001179705.1"/>
</dbReference>
<dbReference type="PDB" id="7JV7">
    <property type="method" value="X-ray"/>
    <property type="resolution" value="1.85 A"/>
    <property type="chains" value="A=159-508"/>
</dbReference>
<dbReference type="PDBsum" id="7JV7"/>
<dbReference type="SMR" id="Q03957"/>
<dbReference type="BioGRID" id="33997">
    <property type="interactions" value="901"/>
</dbReference>
<dbReference type="ComplexPortal" id="CPX-1710">
    <property type="entry name" value="Carboxy-terminal domain protein kinase complex"/>
</dbReference>
<dbReference type="DIP" id="DIP-6631N"/>
<dbReference type="FunCoup" id="Q03957">
    <property type="interactions" value="989"/>
</dbReference>
<dbReference type="IntAct" id="Q03957">
    <property type="interactions" value="41"/>
</dbReference>
<dbReference type="MINT" id="Q03957"/>
<dbReference type="STRING" id="4932.YKL139W"/>
<dbReference type="iPTMnet" id="Q03957"/>
<dbReference type="PaxDb" id="4932-YKL139W"/>
<dbReference type="PeptideAtlas" id="Q03957"/>
<dbReference type="EnsemblFungi" id="YKL139W_mRNA">
    <property type="protein sequence ID" value="YKL139W"/>
    <property type="gene ID" value="YKL139W"/>
</dbReference>
<dbReference type="GeneID" id="853718"/>
<dbReference type="KEGG" id="sce:YKL139W"/>
<dbReference type="AGR" id="SGD:S000001622"/>
<dbReference type="SGD" id="S000001622">
    <property type="gene designation" value="CTK1"/>
</dbReference>
<dbReference type="VEuPathDB" id="FungiDB:YKL139W"/>
<dbReference type="eggNOG" id="KOG0600">
    <property type="taxonomic scope" value="Eukaryota"/>
</dbReference>
<dbReference type="GeneTree" id="ENSGT00940000176088"/>
<dbReference type="HOGENOM" id="CLU_000288_181_1_1"/>
<dbReference type="InParanoid" id="Q03957"/>
<dbReference type="OMA" id="QKMAEYD"/>
<dbReference type="OrthoDB" id="204883at2759"/>
<dbReference type="BioCyc" id="YEAST:G3O-31916-MONOMER"/>
<dbReference type="BRENDA" id="2.7.11.22">
    <property type="organism ID" value="984"/>
</dbReference>
<dbReference type="BRENDA" id="2.7.11.23">
    <property type="organism ID" value="984"/>
</dbReference>
<dbReference type="Reactome" id="R-SCE-674695">
    <property type="pathway name" value="RNA Polymerase II Pre-transcription Events"/>
</dbReference>
<dbReference type="Reactome" id="R-SCE-6796648">
    <property type="pathway name" value="TP53 Regulates Transcription of DNA Repair Genes"/>
</dbReference>
<dbReference type="Reactome" id="R-SCE-6798695">
    <property type="pathway name" value="Neutrophil degranulation"/>
</dbReference>
<dbReference type="Reactome" id="R-SCE-6807505">
    <property type="pathway name" value="RNA polymerase II transcribes snRNA genes"/>
</dbReference>
<dbReference type="Reactome" id="R-SCE-9018519">
    <property type="pathway name" value="Estrogen-dependent gene expression"/>
</dbReference>
<dbReference type="BioGRID-ORCS" id="853718">
    <property type="hits" value="4 hits in 13 CRISPR screens"/>
</dbReference>
<dbReference type="PRO" id="PR:Q03957"/>
<dbReference type="Proteomes" id="UP000002311">
    <property type="component" value="Chromosome XI"/>
</dbReference>
<dbReference type="RNAct" id="Q03957">
    <property type="molecule type" value="protein"/>
</dbReference>
<dbReference type="GO" id="GO:0032806">
    <property type="term" value="C:carboxy-terminal domain protein kinase complex"/>
    <property type="evidence" value="ECO:0000353"/>
    <property type="project" value="ComplexPortal"/>
</dbReference>
<dbReference type="GO" id="GO:0070692">
    <property type="term" value="C:CTDK-1 complex"/>
    <property type="evidence" value="ECO:0000314"/>
    <property type="project" value="SGD"/>
</dbReference>
<dbReference type="GO" id="GO:0008024">
    <property type="term" value="C:cyclin/CDK positive transcription elongation factor complex"/>
    <property type="evidence" value="ECO:0000318"/>
    <property type="project" value="GO_Central"/>
</dbReference>
<dbReference type="GO" id="GO:0005737">
    <property type="term" value="C:cytoplasm"/>
    <property type="evidence" value="ECO:0007669"/>
    <property type="project" value="UniProtKB-SubCell"/>
</dbReference>
<dbReference type="GO" id="GO:0005730">
    <property type="term" value="C:nucleolus"/>
    <property type="evidence" value="ECO:0000314"/>
    <property type="project" value="SGD"/>
</dbReference>
<dbReference type="GO" id="GO:0005654">
    <property type="term" value="C:nucleoplasm"/>
    <property type="evidence" value="ECO:0000314"/>
    <property type="project" value="SGD"/>
</dbReference>
<dbReference type="GO" id="GO:0005634">
    <property type="term" value="C:nucleus"/>
    <property type="evidence" value="ECO:0000314"/>
    <property type="project" value="SGD"/>
</dbReference>
<dbReference type="GO" id="GO:0005524">
    <property type="term" value="F:ATP binding"/>
    <property type="evidence" value="ECO:0007669"/>
    <property type="project" value="UniProtKB-KW"/>
</dbReference>
<dbReference type="GO" id="GO:0030332">
    <property type="term" value="F:cyclin binding"/>
    <property type="evidence" value="ECO:0000318"/>
    <property type="project" value="GO_Central"/>
</dbReference>
<dbReference type="GO" id="GO:0004693">
    <property type="term" value="F:cyclin-dependent protein serine/threonine kinase activity"/>
    <property type="evidence" value="ECO:0000314"/>
    <property type="project" value="SGD"/>
</dbReference>
<dbReference type="GO" id="GO:0004672">
    <property type="term" value="F:protein kinase activity"/>
    <property type="evidence" value="ECO:0007005"/>
    <property type="project" value="SGD"/>
</dbReference>
<dbReference type="GO" id="GO:0008353">
    <property type="term" value="F:RNA polymerase II CTD heptapeptide repeat kinase activity"/>
    <property type="evidence" value="ECO:0000318"/>
    <property type="project" value="GO_Central"/>
</dbReference>
<dbReference type="GO" id="GO:0006974">
    <property type="term" value="P:DNA damage response"/>
    <property type="evidence" value="ECO:0007669"/>
    <property type="project" value="UniProtKB-KW"/>
</dbReference>
<dbReference type="GO" id="GO:0031124">
    <property type="term" value="P:mRNA 3'-end processing"/>
    <property type="evidence" value="ECO:0000314"/>
    <property type="project" value="ComplexPortal"/>
</dbReference>
<dbReference type="GO" id="GO:0032786">
    <property type="term" value="P:positive regulation of DNA-templated transcription, elongation"/>
    <property type="evidence" value="ECO:0000314"/>
    <property type="project" value="SGD"/>
</dbReference>
<dbReference type="GO" id="GO:0045943">
    <property type="term" value="P:positive regulation of transcription by RNA polymerase I"/>
    <property type="evidence" value="ECO:0000314"/>
    <property type="project" value="ComplexPortal"/>
</dbReference>
<dbReference type="GO" id="GO:0045944">
    <property type="term" value="P:positive regulation of transcription by RNA polymerase II"/>
    <property type="evidence" value="ECO:0000303"/>
    <property type="project" value="ComplexPortal"/>
</dbReference>
<dbReference type="GO" id="GO:0032968">
    <property type="term" value="P:positive regulation of transcription elongation by RNA polymerase II"/>
    <property type="evidence" value="ECO:0000318"/>
    <property type="project" value="GO_Central"/>
</dbReference>
<dbReference type="GO" id="GO:0045903">
    <property type="term" value="P:positive regulation of translational fidelity"/>
    <property type="evidence" value="ECO:0000315"/>
    <property type="project" value="SGD"/>
</dbReference>
<dbReference type="GO" id="GO:0006413">
    <property type="term" value="P:translational initiation"/>
    <property type="evidence" value="ECO:0000315"/>
    <property type="project" value="SGD"/>
</dbReference>
<dbReference type="CDD" id="cd07840">
    <property type="entry name" value="STKc_CDK9_like"/>
    <property type="match status" value="1"/>
</dbReference>
<dbReference type="FunFam" id="1.10.510.10:FF:000415">
    <property type="entry name" value="CMGC/CDK/CRK7 protein kinase, variant"/>
    <property type="match status" value="1"/>
</dbReference>
<dbReference type="FunFam" id="3.30.200.20:FF:000588">
    <property type="entry name" value="CTD kinase subunit alpha"/>
    <property type="match status" value="1"/>
</dbReference>
<dbReference type="Gene3D" id="3.30.200.20">
    <property type="entry name" value="Phosphorylase Kinase, domain 1"/>
    <property type="match status" value="1"/>
</dbReference>
<dbReference type="Gene3D" id="1.10.510.10">
    <property type="entry name" value="Transferase(Phosphotransferase) domain 1"/>
    <property type="match status" value="1"/>
</dbReference>
<dbReference type="InterPro" id="IPR050108">
    <property type="entry name" value="CDK"/>
</dbReference>
<dbReference type="InterPro" id="IPR011009">
    <property type="entry name" value="Kinase-like_dom_sf"/>
</dbReference>
<dbReference type="InterPro" id="IPR000719">
    <property type="entry name" value="Prot_kinase_dom"/>
</dbReference>
<dbReference type="InterPro" id="IPR017441">
    <property type="entry name" value="Protein_kinase_ATP_BS"/>
</dbReference>
<dbReference type="InterPro" id="IPR008271">
    <property type="entry name" value="Ser/Thr_kinase_AS"/>
</dbReference>
<dbReference type="PANTHER" id="PTHR24056">
    <property type="entry name" value="CELL DIVISION PROTEIN KINASE"/>
    <property type="match status" value="1"/>
</dbReference>
<dbReference type="PANTHER" id="PTHR24056:SF546">
    <property type="entry name" value="CYCLIN-DEPENDENT KINASE 12"/>
    <property type="match status" value="1"/>
</dbReference>
<dbReference type="Pfam" id="PF00069">
    <property type="entry name" value="Pkinase"/>
    <property type="match status" value="1"/>
</dbReference>
<dbReference type="SMART" id="SM00220">
    <property type="entry name" value="S_TKc"/>
    <property type="match status" value="1"/>
</dbReference>
<dbReference type="SUPFAM" id="SSF56112">
    <property type="entry name" value="Protein kinase-like (PK-like)"/>
    <property type="match status" value="1"/>
</dbReference>
<dbReference type="PROSITE" id="PS00107">
    <property type="entry name" value="PROTEIN_KINASE_ATP"/>
    <property type="match status" value="1"/>
</dbReference>
<dbReference type="PROSITE" id="PS50011">
    <property type="entry name" value="PROTEIN_KINASE_DOM"/>
    <property type="match status" value="1"/>
</dbReference>
<dbReference type="PROSITE" id="PS00108">
    <property type="entry name" value="PROTEIN_KINASE_ST"/>
    <property type="match status" value="1"/>
</dbReference>
<reference key="1">
    <citation type="journal article" date="1991" name="Gene Expr.">
        <title>CTD kinase large subunit is encoded by CTK1, a gene required for normal growth of Saccharomyces cerevisiae.</title>
        <authorList>
            <person name="Lee J.M."/>
            <person name="Greenleaf A.L."/>
        </authorList>
    </citation>
    <scope>NUCLEOTIDE SEQUENCE [GENOMIC DNA]</scope>
</reference>
<reference key="2">
    <citation type="journal article" date="1994" name="Nature">
        <title>Complete DNA sequence of yeast chromosome XI.</title>
        <authorList>
            <person name="Dujon B."/>
            <person name="Alexandraki D."/>
            <person name="Andre B."/>
            <person name="Ansorge W."/>
            <person name="Baladron V."/>
            <person name="Ballesta J.P.G."/>
            <person name="Banrevi A."/>
            <person name="Bolle P.-A."/>
            <person name="Bolotin-Fukuhara M."/>
            <person name="Bossier P."/>
            <person name="Bou G."/>
            <person name="Boyer J."/>
            <person name="Buitrago M.J."/>
            <person name="Cheret G."/>
            <person name="Colleaux L."/>
            <person name="Daignan-Fornier B."/>
            <person name="del Rey F."/>
            <person name="Dion C."/>
            <person name="Domdey H."/>
            <person name="Duesterhoeft A."/>
            <person name="Duesterhus S."/>
            <person name="Entian K.-D."/>
            <person name="Erfle H."/>
            <person name="Esteban P.F."/>
            <person name="Feldmann H."/>
            <person name="Fernandes L."/>
            <person name="Fobo G.M."/>
            <person name="Fritz C."/>
            <person name="Fukuhara H."/>
            <person name="Gabel C."/>
            <person name="Gaillon L."/>
            <person name="Garcia-Cantalejo J.M."/>
            <person name="Garcia-Ramirez J.J."/>
            <person name="Gent M.E."/>
            <person name="Ghazvini M."/>
            <person name="Goffeau A."/>
            <person name="Gonzalez A."/>
            <person name="Grothues D."/>
            <person name="Guerreiro P."/>
            <person name="Hegemann J.H."/>
            <person name="Hewitt N."/>
            <person name="Hilger F."/>
            <person name="Hollenberg C.P."/>
            <person name="Horaitis O."/>
            <person name="Indge K.J."/>
            <person name="Jacquier A."/>
            <person name="James C.M."/>
            <person name="Jauniaux J.-C."/>
            <person name="Jimenez A."/>
            <person name="Keuchel H."/>
            <person name="Kirchrath L."/>
            <person name="Kleine K."/>
            <person name="Koetter P."/>
            <person name="Legrain P."/>
            <person name="Liebl S."/>
            <person name="Louis E.J."/>
            <person name="Maia e Silva A."/>
            <person name="Marck C."/>
            <person name="Monnier A.-L."/>
            <person name="Moestl D."/>
            <person name="Mueller S."/>
            <person name="Obermaier B."/>
            <person name="Oliver S.G."/>
            <person name="Pallier C."/>
            <person name="Pascolo S."/>
            <person name="Pfeiffer F."/>
            <person name="Philippsen P."/>
            <person name="Planta R.J."/>
            <person name="Pohl F.M."/>
            <person name="Pohl T.M."/>
            <person name="Poehlmann R."/>
            <person name="Portetelle D."/>
            <person name="Purnelle B."/>
            <person name="Puzos V."/>
            <person name="Ramezani Rad M."/>
            <person name="Rasmussen S.W."/>
            <person name="Remacha M.A."/>
            <person name="Revuelta J.L."/>
            <person name="Richard G.-F."/>
            <person name="Rieger M."/>
            <person name="Rodrigues-Pousada C."/>
            <person name="Rose M."/>
            <person name="Rupp T."/>
            <person name="Santos M.A."/>
            <person name="Schwager C."/>
            <person name="Sensen C."/>
            <person name="Skala J."/>
            <person name="Soares H."/>
            <person name="Sor F."/>
            <person name="Stegemann J."/>
            <person name="Tettelin H."/>
            <person name="Thierry A."/>
            <person name="Tzermia M."/>
            <person name="Urrestarazu L.A."/>
            <person name="van Dyck L."/>
            <person name="van Vliet-Reedijk J.C."/>
            <person name="Valens M."/>
            <person name="Vandenbol M."/>
            <person name="Vilela C."/>
            <person name="Vissers S."/>
            <person name="von Wettstein D."/>
            <person name="Voss H."/>
            <person name="Wiemann S."/>
            <person name="Xu G."/>
            <person name="Zimmermann J."/>
            <person name="Haasemann M."/>
            <person name="Becker I."/>
            <person name="Mewes H.-W."/>
        </authorList>
    </citation>
    <scope>NUCLEOTIDE SEQUENCE [LARGE SCALE GENOMIC DNA]</scope>
    <source>
        <strain>ATCC 204508 / S288c</strain>
    </source>
</reference>
<reference key="3">
    <citation type="journal article" date="2014" name="G3 (Bethesda)">
        <title>The reference genome sequence of Saccharomyces cerevisiae: Then and now.</title>
        <authorList>
            <person name="Engel S.R."/>
            <person name="Dietrich F.S."/>
            <person name="Fisk D.G."/>
            <person name="Binkley G."/>
            <person name="Balakrishnan R."/>
            <person name="Costanzo M.C."/>
            <person name="Dwight S.S."/>
            <person name="Hitz B.C."/>
            <person name="Karra K."/>
            <person name="Nash R.S."/>
            <person name="Weng S."/>
            <person name="Wong E.D."/>
            <person name="Lloyd P."/>
            <person name="Skrzypek M.S."/>
            <person name="Miyasato S.R."/>
            <person name="Simison M."/>
            <person name="Cherry J.M."/>
        </authorList>
    </citation>
    <scope>GENOME REANNOTATION</scope>
    <source>
        <strain>ATCC 204508 / S288c</strain>
    </source>
</reference>
<reference key="4">
    <citation type="journal article" date="1995" name="Mol. Cell. Biol.">
        <title>The yeast carboxyl-terminal repeat domain kinase CTDK-I is a divergent cyclin-cyclin-dependent kinase complex.</title>
        <authorList>
            <person name="Sterner D.E."/>
            <person name="Lee J.M."/>
            <person name="Hardin S.E."/>
            <person name="Greenleaf A.L."/>
        </authorList>
    </citation>
    <scope>CTD KINASE ACTIVITY</scope>
    <scope>SUBUNIT</scope>
    <scope>DISRUPTION PHENOTYPE</scope>
</reference>
<reference key="5">
    <citation type="journal article" date="1997" name="J. Biol. Chem.">
        <title>Modulation of RNA polymerase II elongation efficiency by C-terminal heptapeptide repeat domain kinase I.</title>
        <authorList>
            <person name="Lee J.M."/>
            <person name="Greenleaf A.L."/>
        </authorList>
    </citation>
    <scope>FUNCTION IN RNA POLYMERASE II TRANSCRIPTION</scope>
</reference>
<reference key="6">
    <citation type="journal article" date="1999" name="J. Biol. Chem.">
        <title>Yeast carboxyl-terminal domain kinase I positively and negatively regulates RNA polymerase II carboxyl-terminal domain phosphorylation.</title>
        <authorList>
            <person name="Patturajan M."/>
            <person name="Conrad N.K."/>
            <person name="Bregman D.B."/>
            <person name="Corden J.L."/>
        </authorList>
    </citation>
    <scope>FUNCTION IN PHOSPHORYLATION REGULATION</scope>
    <scope>DISRUPTION PHENOTYPE</scope>
</reference>
<reference key="7">
    <citation type="journal article" date="2001" name="Gene">
        <title>Involvement of yeast carboxy-terminal domain kinase I (CTDK-I) in transcription elongation in vivo.</title>
        <authorList>
            <person name="Jona G."/>
            <person name="Wittschieben B.O."/>
            <person name="Svejstrup J.Q."/>
            <person name="Gileadi O."/>
        </authorList>
    </citation>
    <scope>DISRUPTION PHENOTYPE</scope>
</reference>
<reference key="8">
    <citation type="journal article" date="2001" name="J. Biol. Chem.">
        <title>Activation of the cyclin-dependent kinase CTDK-I requires the heterodimerization of two unstable subunits.</title>
        <authorList>
            <person name="Hautbergue G."/>
            <person name="Goguel V."/>
        </authorList>
    </citation>
    <scope>ACTIVATION</scope>
    <scope>INTERACTION WITH CTK2 AND CTK3</scope>
</reference>
<reference key="9">
    <citation type="journal article" date="2002" name="Mol. Cell">
        <title>The RNA polymerase II CTD kinase CTDK-I affects pre-mRNA 3' cleavage/polyadenylation through the processing component Pti1p.</title>
        <authorList>
            <person name="Skaar D.A."/>
            <person name="Greenleaf A.L."/>
        </authorList>
    </citation>
    <scope>FUNCTION IN PRE-MRNA END PROCESSING</scope>
</reference>
<reference key="10">
    <citation type="journal article" date="2003" name="Eukaryot. Cell">
        <title>Budding yeast CTDK-I is required for DNA damage-induced transcription.</title>
        <authorList>
            <person name="Ostapenko D."/>
            <person name="Solomon M.J."/>
        </authorList>
    </citation>
    <scope>FUNCTION</scope>
    <scope>MUTAGENESIS OF ASP-324</scope>
    <scope>DISRUPTION PHENOTYPE</scope>
</reference>
<reference key="11">
    <citation type="journal article" date="2003" name="Genes Dev.">
        <title>Phosphorylation of RNA polymerase II CTD regulates H3 methylation in yeast.</title>
        <authorList>
            <person name="Xiao T."/>
            <person name="Hall H."/>
            <person name="Kizer K.O."/>
            <person name="Shibata Y."/>
            <person name="Hall M.C."/>
            <person name="Borchers C.H."/>
            <person name="Strahl B.D."/>
        </authorList>
    </citation>
    <scope>FUNCTION IN H3K36 METHYLATION</scope>
</reference>
<reference key="12">
    <citation type="journal article" date="2003" name="Nature">
        <title>Global analysis of protein localization in budding yeast.</title>
        <authorList>
            <person name="Huh W.-K."/>
            <person name="Falvo J.V."/>
            <person name="Gerke L.C."/>
            <person name="Carroll A.S."/>
            <person name="Howson R.W."/>
            <person name="Weissman J.S."/>
            <person name="O'Shea E.K."/>
        </authorList>
    </citation>
    <scope>SUBCELLULAR LOCATION [LARGE SCALE ANALYSIS]</scope>
</reference>
<reference key="13">
    <citation type="journal article" date="2003" name="Nature">
        <title>Global analysis of protein expression in yeast.</title>
        <authorList>
            <person name="Ghaemmaghami S."/>
            <person name="Huh W.-K."/>
            <person name="Bower K."/>
            <person name="Howson R.W."/>
            <person name="Belle A."/>
            <person name="Dephoure N."/>
            <person name="O'Shea E.K."/>
            <person name="Weissman J.S."/>
        </authorList>
    </citation>
    <scope>LEVEL OF PROTEIN EXPRESSION [LARGE SCALE ANALYSIS]</scope>
</reference>
<reference key="14">
    <citation type="journal article" date="2004" name="J. Biol. Chem.">
        <title>C-terminal repeat domain kinase I phosphorylates Ser2 and Ser5 of RNA polymerase II C-terminal domain repeats.</title>
        <authorList>
            <person name="Jones J.C."/>
            <person name="Phatnani H.P."/>
            <person name="Haystead T.A."/>
            <person name="MacDonald J.A."/>
            <person name="Alam S.M."/>
            <person name="Greenleaf A.L."/>
        </authorList>
    </citation>
    <scope>FUNCTION OF THE CTDK-I COMPLEX IN PHOSPHORYLATION</scope>
</reference>
<reference key="15">
    <citation type="journal article" date="2004" name="Nucleic Acids Res.">
        <title>CTD kinase I is involved in RNA polymerase I transcription.</title>
        <authorList>
            <person name="Bouchoux C."/>
            <person name="Hautbergue G."/>
            <person name="Grenetier S."/>
            <person name="Carles C."/>
            <person name="Riva M."/>
            <person name="Goguel V."/>
        </authorList>
    </citation>
    <scope>FUNCTION IN RNA POLYMERASE I TRANSCRIPTION</scope>
    <scope>INTERACTION WITH RNA POLYMERASE I</scope>
    <scope>SUBCELLULAR LOCATION</scope>
</reference>
<reference key="16">
    <citation type="journal article" date="2004" name="Proc. Natl. Acad. Sci. U.S.A.">
        <title>A genome-wide screen for Saccharomyces cerevisiae deletion mutants that affect telomere length.</title>
        <authorList>
            <person name="Askree S.H."/>
            <person name="Yehuda T."/>
            <person name="Smolikov S."/>
            <person name="Gurevich R."/>
            <person name="Hawk J."/>
            <person name="Coker C."/>
            <person name="Krauskopf A."/>
            <person name="Kupiec M."/>
            <person name="McEachern M.J."/>
        </authorList>
    </citation>
    <scope>FUNCTION IN TELOMERE MAINTENANCE</scope>
</reference>
<reference key="17">
    <citation type="journal article" date="2005" name="FEBS Lett.">
        <title>Glucose deprivation mediates interaction between CTDK-I and Snf1 in Saccharomyces cerevisiae.</title>
        <authorList>
            <person name="Van Driessche B."/>
            <person name="Coddens S."/>
            <person name="Van Mullem V."/>
            <person name="Vandenhaute J."/>
        </authorList>
    </citation>
    <scope>FUNCTION IN RESPONSE TO GLUCOSE LIMITATION</scope>
    <scope>INTERACTION WITH SNF1</scope>
</reference>
<reference key="18">
    <citation type="journal article" date="2005" name="Mol. Cell. Biol.">
        <title>Phosphorylation by Cak1 regulates the C-terminal domain kinase Ctk1 in Saccharomyces cerevisiae.</title>
        <authorList>
            <person name="Ostapenko D."/>
            <person name="Solomon M.J."/>
        </authorList>
    </citation>
    <scope>PHOSPHORYLATION AT THR-338 BY CAK1</scope>
    <scope>MUTAGENESIS OF ASP-324 AND THR-338</scope>
</reference>
<reference key="19">
    <citation type="journal article" date="2006" name="Nucleic Acids Res.">
        <title>CTD kinase I is required for the integrity of the rDNA tandem array.</title>
        <authorList>
            <person name="Grenetier S."/>
            <person name="Bouchoux C."/>
            <person name="Goguel V."/>
        </authorList>
    </citation>
    <scope>FUNCTION</scope>
</reference>
<reference key="20">
    <citation type="journal article" date="2007" name="Genes Dev.">
        <title>The RNA polymerase II CTD kinase Ctk1 functions in translation elongation.</title>
        <authorList>
            <person name="Roether S."/>
            <person name="Straesser K."/>
        </authorList>
    </citation>
    <scope>FUNCTION IN TRANSLATION</scope>
    <scope>INTERACTION WITH RIBOSOMES</scope>
</reference>
<reference key="21">
    <citation type="journal article" date="2007" name="Mol. Cell. Biol.">
        <title>The RNA polymerase II kinase Ctk1 regulates positioning of a 5' histone methylation boundary along genes.</title>
        <authorList>
            <person name="Xiao T."/>
            <person name="Shibata Y."/>
            <person name="Rao B."/>
            <person name="Laribee R.N."/>
            <person name="O'Rourke R."/>
            <person name="Buck M.J."/>
            <person name="Greenblatt J.F."/>
            <person name="Krogan N.J."/>
            <person name="Lieb J.D."/>
            <person name="Strahl B.D."/>
        </authorList>
    </citation>
    <scope>FUNCTION IN H3K4 METHYLATION</scope>
</reference>
<sequence>MSYNNGNTYSKSYSRNNKRPLFGKRSPNPQSLARPPPPKRIRTDSGYQSNMDNISSHRVNSNDQPGHTKSRGNNNLSRYNDTSFQTSSRYQGSRYNNNNTSYENRPKSIKRDETKAEFLSHLPKGPKSVEKSRYNNSSNTSNDIKNGYHASKYYNHKGQEGRSVIAKKVPVSVLTQQRSTSVYLRIMQVGEGTYGKVYKAKNTNTEKLVALKKLRLQGEREGFPITSIREIKLLQSFDHPNVSTIKEIMVESQKTVYMIFEYADNDLSGLLLNKEVQISHSQCKHLFKQLLLGMEYLHDNKILHRDVKGSNILIDNQGNLKITDFGLARKMNSRADYTNRVITLWYRPPELLLGTTNYGTEVDMWGCGCLLVELFNKTAIFQGSNELEQIESIFKIMGTPTINSWPTLYDMPWFFMIMPQQTTKYVNNFSEKFKSVLPSSKCLQLAINLLCYDQTKRFSATEALQSDYFKEEPKPEPLVLDGLVSCHEYEVKLARKQKRPNILSTNTNNKGNGNSNNNNNNNNDDDDK</sequence>
<proteinExistence type="evidence at protein level"/>
<keyword id="KW-0002">3D-structure</keyword>
<keyword id="KW-0067">ATP-binding</keyword>
<keyword id="KW-0963">Cytoplasm</keyword>
<keyword id="KW-0227">DNA damage</keyword>
<keyword id="KW-0418">Kinase</keyword>
<keyword id="KW-0507">mRNA processing</keyword>
<keyword id="KW-0547">Nucleotide-binding</keyword>
<keyword id="KW-0539">Nucleus</keyword>
<keyword id="KW-0597">Phosphoprotein</keyword>
<keyword id="KW-0648">Protein biosynthesis</keyword>
<keyword id="KW-1185">Reference proteome</keyword>
<keyword id="KW-0723">Serine/threonine-protein kinase</keyword>
<keyword id="KW-0346">Stress response</keyword>
<keyword id="KW-0804">Transcription</keyword>
<keyword id="KW-0808">Transferase</keyword>